<keyword id="KW-0963">Cytoplasm</keyword>
<keyword id="KW-0460">Magnesium</keyword>
<keyword id="KW-0479">Metal-binding</keyword>
<keyword id="KW-0548">Nucleotidyltransferase</keyword>
<keyword id="KW-0694">RNA-binding</keyword>
<keyword id="KW-0808">Transferase</keyword>
<evidence type="ECO:0000255" key="1">
    <source>
        <dbReference type="HAMAP-Rule" id="MF_01595"/>
    </source>
</evidence>
<gene>
    <name evidence="1" type="primary">pnp</name>
    <name type="ordered locus">PFLU_5249</name>
</gene>
<feature type="chain" id="PRO_1000215666" description="Polyribonucleotide nucleotidyltransferase">
    <location>
        <begin position="1"/>
        <end position="701"/>
    </location>
</feature>
<feature type="domain" description="KH" evidence="1">
    <location>
        <begin position="554"/>
        <end position="613"/>
    </location>
</feature>
<feature type="domain" description="S1 motif" evidence="1">
    <location>
        <begin position="623"/>
        <end position="691"/>
    </location>
</feature>
<feature type="binding site" evidence="1">
    <location>
        <position position="487"/>
    </location>
    <ligand>
        <name>Mg(2+)</name>
        <dbReference type="ChEBI" id="CHEBI:18420"/>
    </ligand>
</feature>
<feature type="binding site" evidence="1">
    <location>
        <position position="493"/>
    </location>
    <ligand>
        <name>Mg(2+)</name>
        <dbReference type="ChEBI" id="CHEBI:18420"/>
    </ligand>
</feature>
<organism>
    <name type="scientific">Pseudomonas fluorescens (strain SBW25)</name>
    <dbReference type="NCBI Taxonomy" id="216595"/>
    <lineage>
        <taxon>Bacteria</taxon>
        <taxon>Pseudomonadati</taxon>
        <taxon>Pseudomonadota</taxon>
        <taxon>Gammaproteobacteria</taxon>
        <taxon>Pseudomonadales</taxon>
        <taxon>Pseudomonadaceae</taxon>
        <taxon>Pseudomonas</taxon>
    </lineage>
</organism>
<reference key="1">
    <citation type="journal article" date="2009" name="Genome Biol.">
        <title>Genomic and genetic analyses of diversity and plant interactions of Pseudomonas fluorescens.</title>
        <authorList>
            <person name="Silby M.W."/>
            <person name="Cerdeno-Tarraga A.M."/>
            <person name="Vernikos G.S."/>
            <person name="Giddens S.R."/>
            <person name="Jackson R.W."/>
            <person name="Preston G.M."/>
            <person name="Zhang X.-X."/>
            <person name="Moon C.D."/>
            <person name="Gehrig S.M."/>
            <person name="Godfrey S.A.C."/>
            <person name="Knight C.G."/>
            <person name="Malone J.G."/>
            <person name="Robinson Z."/>
            <person name="Spiers A.J."/>
            <person name="Harris S."/>
            <person name="Challis G.L."/>
            <person name="Yaxley A.M."/>
            <person name="Harris D."/>
            <person name="Seeger K."/>
            <person name="Murphy L."/>
            <person name="Rutter S."/>
            <person name="Squares R."/>
            <person name="Quail M.A."/>
            <person name="Saunders E."/>
            <person name="Mavromatis K."/>
            <person name="Brettin T.S."/>
            <person name="Bentley S.D."/>
            <person name="Hothersall J."/>
            <person name="Stephens E."/>
            <person name="Thomas C.M."/>
            <person name="Parkhill J."/>
            <person name="Levy S.B."/>
            <person name="Rainey P.B."/>
            <person name="Thomson N.R."/>
        </authorList>
    </citation>
    <scope>NUCLEOTIDE SEQUENCE [LARGE SCALE GENOMIC DNA]</scope>
    <source>
        <strain>SBW25</strain>
    </source>
</reference>
<dbReference type="EC" id="2.7.7.8" evidence="1"/>
<dbReference type="EMBL" id="AM181176">
    <property type="protein sequence ID" value="CAY52345.1"/>
    <property type="molecule type" value="Genomic_DNA"/>
</dbReference>
<dbReference type="RefSeq" id="WP_015885915.1">
    <property type="nucleotide sequence ID" value="NC_012660.1"/>
</dbReference>
<dbReference type="SMR" id="C3K255"/>
<dbReference type="STRING" id="294.SRM1_00830"/>
<dbReference type="PATRIC" id="fig|216595.4.peg.5381"/>
<dbReference type="eggNOG" id="COG1185">
    <property type="taxonomic scope" value="Bacteria"/>
</dbReference>
<dbReference type="HOGENOM" id="CLU_004217_2_2_6"/>
<dbReference type="OrthoDB" id="9804305at2"/>
<dbReference type="GO" id="GO:0005829">
    <property type="term" value="C:cytosol"/>
    <property type="evidence" value="ECO:0007669"/>
    <property type="project" value="TreeGrafter"/>
</dbReference>
<dbReference type="GO" id="GO:0000175">
    <property type="term" value="F:3'-5'-RNA exonuclease activity"/>
    <property type="evidence" value="ECO:0007669"/>
    <property type="project" value="TreeGrafter"/>
</dbReference>
<dbReference type="GO" id="GO:0000287">
    <property type="term" value="F:magnesium ion binding"/>
    <property type="evidence" value="ECO:0007669"/>
    <property type="project" value="UniProtKB-UniRule"/>
</dbReference>
<dbReference type="GO" id="GO:0004654">
    <property type="term" value="F:polyribonucleotide nucleotidyltransferase activity"/>
    <property type="evidence" value="ECO:0007669"/>
    <property type="project" value="UniProtKB-UniRule"/>
</dbReference>
<dbReference type="GO" id="GO:0003723">
    <property type="term" value="F:RNA binding"/>
    <property type="evidence" value="ECO:0007669"/>
    <property type="project" value="UniProtKB-UniRule"/>
</dbReference>
<dbReference type="GO" id="GO:0006402">
    <property type="term" value="P:mRNA catabolic process"/>
    <property type="evidence" value="ECO:0007669"/>
    <property type="project" value="UniProtKB-UniRule"/>
</dbReference>
<dbReference type="GO" id="GO:0006396">
    <property type="term" value="P:RNA processing"/>
    <property type="evidence" value="ECO:0007669"/>
    <property type="project" value="InterPro"/>
</dbReference>
<dbReference type="CDD" id="cd02393">
    <property type="entry name" value="KH-I_PNPase"/>
    <property type="match status" value="1"/>
</dbReference>
<dbReference type="CDD" id="cd11363">
    <property type="entry name" value="RNase_PH_PNPase_1"/>
    <property type="match status" value="1"/>
</dbReference>
<dbReference type="CDD" id="cd11364">
    <property type="entry name" value="RNase_PH_PNPase_2"/>
    <property type="match status" value="1"/>
</dbReference>
<dbReference type="CDD" id="cd04472">
    <property type="entry name" value="S1_PNPase"/>
    <property type="match status" value="1"/>
</dbReference>
<dbReference type="FunFam" id="2.40.50.140:FF:000023">
    <property type="entry name" value="Polyribonucleotide nucleotidyltransferase"/>
    <property type="match status" value="1"/>
</dbReference>
<dbReference type="FunFam" id="3.30.1370.10:FF:000001">
    <property type="entry name" value="Polyribonucleotide nucleotidyltransferase"/>
    <property type="match status" value="1"/>
</dbReference>
<dbReference type="FunFam" id="3.30.230.70:FF:000001">
    <property type="entry name" value="Polyribonucleotide nucleotidyltransferase"/>
    <property type="match status" value="1"/>
</dbReference>
<dbReference type="FunFam" id="3.30.230.70:FF:000002">
    <property type="entry name" value="Polyribonucleotide nucleotidyltransferase"/>
    <property type="match status" value="1"/>
</dbReference>
<dbReference type="Gene3D" id="3.30.230.70">
    <property type="entry name" value="GHMP Kinase, N-terminal domain"/>
    <property type="match status" value="2"/>
</dbReference>
<dbReference type="Gene3D" id="3.30.1370.10">
    <property type="entry name" value="K Homology domain, type 1"/>
    <property type="match status" value="1"/>
</dbReference>
<dbReference type="Gene3D" id="2.40.50.140">
    <property type="entry name" value="Nucleic acid-binding proteins"/>
    <property type="match status" value="1"/>
</dbReference>
<dbReference type="HAMAP" id="MF_01595">
    <property type="entry name" value="PNPase"/>
    <property type="match status" value="1"/>
</dbReference>
<dbReference type="InterPro" id="IPR001247">
    <property type="entry name" value="ExoRNase_PH_dom1"/>
</dbReference>
<dbReference type="InterPro" id="IPR015847">
    <property type="entry name" value="ExoRNase_PH_dom2"/>
</dbReference>
<dbReference type="InterPro" id="IPR036345">
    <property type="entry name" value="ExoRNase_PH_dom2_sf"/>
</dbReference>
<dbReference type="InterPro" id="IPR004087">
    <property type="entry name" value="KH_dom"/>
</dbReference>
<dbReference type="InterPro" id="IPR004088">
    <property type="entry name" value="KH_dom_type_1"/>
</dbReference>
<dbReference type="InterPro" id="IPR036612">
    <property type="entry name" value="KH_dom_type_1_sf"/>
</dbReference>
<dbReference type="InterPro" id="IPR012340">
    <property type="entry name" value="NA-bd_OB-fold"/>
</dbReference>
<dbReference type="InterPro" id="IPR012162">
    <property type="entry name" value="PNPase"/>
</dbReference>
<dbReference type="InterPro" id="IPR027408">
    <property type="entry name" value="PNPase/RNase_PH_dom_sf"/>
</dbReference>
<dbReference type="InterPro" id="IPR015848">
    <property type="entry name" value="PNPase_PH_RNA-bd_bac/org-type"/>
</dbReference>
<dbReference type="InterPro" id="IPR020568">
    <property type="entry name" value="Ribosomal_Su5_D2-typ_SF"/>
</dbReference>
<dbReference type="InterPro" id="IPR003029">
    <property type="entry name" value="S1_domain"/>
</dbReference>
<dbReference type="NCBIfam" id="TIGR03591">
    <property type="entry name" value="polynuc_phos"/>
    <property type="match status" value="1"/>
</dbReference>
<dbReference type="NCBIfam" id="NF008805">
    <property type="entry name" value="PRK11824.1"/>
    <property type="match status" value="1"/>
</dbReference>
<dbReference type="PANTHER" id="PTHR11252">
    <property type="entry name" value="POLYRIBONUCLEOTIDE NUCLEOTIDYLTRANSFERASE"/>
    <property type="match status" value="1"/>
</dbReference>
<dbReference type="PANTHER" id="PTHR11252:SF0">
    <property type="entry name" value="POLYRIBONUCLEOTIDE NUCLEOTIDYLTRANSFERASE 1, MITOCHONDRIAL"/>
    <property type="match status" value="1"/>
</dbReference>
<dbReference type="Pfam" id="PF00013">
    <property type="entry name" value="KH_1"/>
    <property type="match status" value="1"/>
</dbReference>
<dbReference type="Pfam" id="PF03726">
    <property type="entry name" value="PNPase"/>
    <property type="match status" value="1"/>
</dbReference>
<dbReference type="Pfam" id="PF01138">
    <property type="entry name" value="RNase_PH"/>
    <property type="match status" value="2"/>
</dbReference>
<dbReference type="Pfam" id="PF03725">
    <property type="entry name" value="RNase_PH_C"/>
    <property type="match status" value="2"/>
</dbReference>
<dbReference type="Pfam" id="PF00575">
    <property type="entry name" value="S1"/>
    <property type="match status" value="1"/>
</dbReference>
<dbReference type="PIRSF" id="PIRSF005499">
    <property type="entry name" value="PNPase"/>
    <property type="match status" value="1"/>
</dbReference>
<dbReference type="SMART" id="SM00322">
    <property type="entry name" value="KH"/>
    <property type="match status" value="1"/>
</dbReference>
<dbReference type="SMART" id="SM00316">
    <property type="entry name" value="S1"/>
    <property type="match status" value="1"/>
</dbReference>
<dbReference type="SUPFAM" id="SSF54791">
    <property type="entry name" value="Eukaryotic type KH-domain (KH-domain type I)"/>
    <property type="match status" value="1"/>
</dbReference>
<dbReference type="SUPFAM" id="SSF50249">
    <property type="entry name" value="Nucleic acid-binding proteins"/>
    <property type="match status" value="1"/>
</dbReference>
<dbReference type="SUPFAM" id="SSF55666">
    <property type="entry name" value="Ribonuclease PH domain 2-like"/>
    <property type="match status" value="2"/>
</dbReference>
<dbReference type="SUPFAM" id="SSF54211">
    <property type="entry name" value="Ribosomal protein S5 domain 2-like"/>
    <property type="match status" value="2"/>
</dbReference>
<dbReference type="PROSITE" id="PS50084">
    <property type="entry name" value="KH_TYPE_1"/>
    <property type="match status" value="1"/>
</dbReference>
<dbReference type="PROSITE" id="PS50126">
    <property type="entry name" value="S1"/>
    <property type="match status" value="1"/>
</dbReference>
<protein>
    <recommendedName>
        <fullName evidence="1">Polyribonucleotide nucleotidyltransferase</fullName>
        <ecNumber evidence="1">2.7.7.8</ecNumber>
    </recommendedName>
    <alternativeName>
        <fullName evidence="1">Polynucleotide phosphorylase</fullName>
        <shortName evidence="1">PNPase</shortName>
    </alternativeName>
</protein>
<comment type="function">
    <text evidence="1">Involved in mRNA degradation. Catalyzes the phosphorolysis of single-stranded polyribonucleotides processively in the 3'- to 5'-direction.</text>
</comment>
<comment type="catalytic activity">
    <reaction evidence="1">
        <text>RNA(n+1) + phosphate = RNA(n) + a ribonucleoside 5'-diphosphate</text>
        <dbReference type="Rhea" id="RHEA:22096"/>
        <dbReference type="Rhea" id="RHEA-COMP:14527"/>
        <dbReference type="Rhea" id="RHEA-COMP:17342"/>
        <dbReference type="ChEBI" id="CHEBI:43474"/>
        <dbReference type="ChEBI" id="CHEBI:57930"/>
        <dbReference type="ChEBI" id="CHEBI:140395"/>
        <dbReference type="EC" id="2.7.7.8"/>
    </reaction>
</comment>
<comment type="cofactor">
    <cofactor evidence="1">
        <name>Mg(2+)</name>
        <dbReference type="ChEBI" id="CHEBI:18420"/>
    </cofactor>
</comment>
<comment type="subunit">
    <text evidence="1">Component of the RNA degradosome, which is a multiprotein complex involved in RNA processing and mRNA degradation.</text>
</comment>
<comment type="subcellular location">
    <subcellularLocation>
        <location evidence="1">Cytoplasm</location>
    </subcellularLocation>
</comment>
<comment type="similarity">
    <text evidence="1">Belongs to the polyribonucleotide nucleotidyltransferase family.</text>
</comment>
<proteinExistence type="inferred from homology"/>
<sequence length="701" mass="74936">MNPVIKKFQFGQSTVTLETGRIARQASGAVLVTVDDDVTVLVTVVGAKTADPSKGFFPLSVHYQEKTYAAGKIPGGFFKREGRPSEKETLTSRLIDRPIRPLFPEGFMNEVQVVCTVVSTSKKTDPDIAAMIGTSAALAISGIPFDGPIGAARVAFHESTGYLLNPTYEQQKASSLDMVVAGTSEAVLMVESEAKELTEDQMLGAVLFAHDEFQVVINAVKELAAEAAKPTWTWAPQPEATALLGAIRSEFGAAISDAYTITVKADRYARLGELKDQVVAKLSGEEGQPSSSEVKAAFGEIEYRTVRENIVNGKPRIDGRDTRTVRPLNIEVGVLPKTHGSALFTRGETQALVVATLGTARDAQLLDTLEGEKKDPFMLHYNFPPFSVGECGRMGGAGRREIGHGRLARRSISAMLPAADVFPYTIRVVSEITESNGSSSMASVCGASLALMDAGVPMKAPVAGIAMGLVKEGQKFAILTDILGDEDHLGDMDFKVAGTAKGVTALQMDIKIKGITEEIMEIALGQALEARLNILGQMNQIIGQSRTELSENAPTMIAMKIDTDKIRDVIGKGGATIRAICEETKASIDIEDDGSIKIFGETKEAAEAARQRVLGITAEAEIGKIYVGKVERIVDFGAFVNILPGKDGLVHISMLSDARVEKVTDILKEGQEVEVLVLDVDNRGRIKLSIKDVAAAKASGV</sequence>
<accession>C3K255</accession>
<name>PNP_PSEFS</name>